<sequence>MIDEIKAQLDSHQKVMESVKGELAPKIAAVADLLVDALGNGKKLLVMGNGGSAADAQHFAAEIVGRFKMERRGLPAIALTTDTSILTAIGNDYGFEQIFRRQIEALACEGDVVVGISTSGTSKNVHGALLLADQVGCRTIGLLGKDGGTIREIVDVDLTVSCDDTPRVQEGHITIIHIICDLLEKRLFG</sequence>
<accession>A5G5G9</accession>
<feature type="chain" id="PRO_1000075097" description="Phosphoheptose isomerase">
    <location>
        <begin position="1"/>
        <end position="189"/>
    </location>
</feature>
<feature type="domain" description="SIS" evidence="1">
    <location>
        <begin position="34"/>
        <end position="189"/>
    </location>
</feature>
<feature type="binding site" evidence="1">
    <location>
        <begin position="49"/>
        <end position="51"/>
    </location>
    <ligand>
        <name>substrate</name>
    </ligand>
</feature>
<feature type="binding site" evidence="1">
    <location>
        <position position="58"/>
    </location>
    <ligand>
        <name>Zn(2+)</name>
        <dbReference type="ChEBI" id="CHEBI:29105"/>
    </ligand>
</feature>
<feature type="binding site" evidence="1">
    <location>
        <position position="62"/>
    </location>
    <ligand>
        <name>substrate</name>
    </ligand>
</feature>
<feature type="binding site" evidence="1">
    <location>
        <position position="62"/>
    </location>
    <ligand>
        <name>Zn(2+)</name>
        <dbReference type="ChEBI" id="CHEBI:29105"/>
    </ligand>
</feature>
<feature type="binding site" evidence="1">
    <location>
        <begin position="91"/>
        <end position="92"/>
    </location>
    <ligand>
        <name>substrate</name>
    </ligand>
</feature>
<feature type="binding site" evidence="1">
    <location>
        <begin position="117"/>
        <end position="119"/>
    </location>
    <ligand>
        <name>substrate</name>
    </ligand>
</feature>
<feature type="binding site" evidence="1">
    <location>
        <position position="122"/>
    </location>
    <ligand>
        <name>substrate</name>
    </ligand>
</feature>
<feature type="binding site" evidence="1">
    <location>
        <position position="169"/>
    </location>
    <ligand>
        <name>substrate</name>
    </ligand>
</feature>
<feature type="binding site" evidence="1">
    <location>
        <position position="169"/>
    </location>
    <ligand>
        <name>Zn(2+)</name>
        <dbReference type="ChEBI" id="CHEBI:29105"/>
    </ligand>
</feature>
<feature type="binding site" evidence="1">
    <location>
        <position position="177"/>
    </location>
    <ligand>
        <name>Zn(2+)</name>
        <dbReference type="ChEBI" id="CHEBI:29105"/>
    </ligand>
</feature>
<reference key="1">
    <citation type="submission" date="2007-05" db="EMBL/GenBank/DDBJ databases">
        <title>Complete sequence of Geobacter uraniireducens Rf4.</title>
        <authorList>
            <consortium name="US DOE Joint Genome Institute"/>
            <person name="Copeland A."/>
            <person name="Lucas S."/>
            <person name="Lapidus A."/>
            <person name="Barry K."/>
            <person name="Detter J.C."/>
            <person name="Glavina del Rio T."/>
            <person name="Hammon N."/>
            <person name="Israni S."/>
            <person name="Dalin E."/>
            <person name="Tice H."/>
            <person name="Pitluck S."/>
            <person name="Chertkov O."/>
            <person name="Brettin T."/>
            <person name="Bruce D."/>
            <person name="Han C."/>
            <person name="Schmutz J."/>
            <person name="Larimer F."/>
            <person name="Land M."/>
            <person name="Hauser L."/>
            <person name="Kyrpides N."/>
            <person name="Mikhailova N."/>
            <person name="Shelobolina E."/>
            <person name="Aklujkar M."/>
            <person name="Lovley D."/>
            <person name="Richardson P."/>
        </authorList>
    </citation>
    <scope>NUCLEOTIDE SEQUENCE [LARGE SCALE GENOMIC DNA]</scope>
    <source>
        <strain>ATCC BAA-1134 / JCM 13001 / Rf4</strain>
    </source>
</reference>
<dbReference type="EC" id="5.3.1.28" evidence="1"/>
<dbReference type="EMBL" id="CP000698">
    <property type="protein sequence ID" value="ABQ27037.1"/>
    <property type="molecule type" value="Genomic_DNA"/>
</dbReference>
<dbReference type="RefSeq" id="WP_011939711.1">
    <property type="nucleotide sequence ID" value="NC_009483.1"/>
</dbReference>
<dbReference type="SMR" id="A5G5G9"/>
<dbReference type="STRING" id="351605.Gura_2864"/>
<dbReference type="KEGG" id="gur:Gura_2864"/>
<dbReference type="HOGENOM" id="CLU_080999_4_0_7"/>
<dbReference type="OrthoDB" id="9810929at2"/>
<dbReference type="UniPathway" id="UPA00041">
    <property type="reaction ID" value="UER00436"/>
</dbReference>
<dbReference type="Proteomes" id="UP000006695">
    <property type="component" value="Chromosome"/>
</dbReference>
<dbReference type="GO" id="GO:0005737">
    <property type="term" value="C:cytoplasm"/>
    <property type="evidence" value="ECO:0007669"/>
    <property type="project" value="UniProtKB-SubCell"/>
</dbReference>
<dbReference type="GO" id="GO:0097367">
    <property type="term" value="F:carbohydrate derivative binding"/>
    <property type="evidence" value="ECO:0007669"/>
    <property type="project" value="InterPro"/>
</dbReference>
<dbReference type="GO" id="GO:0008968">
    <property type="term" value="F:D-sedoheptulose 7-phosphate isomerase activity"/>
    <property type="evidence" value="ECO:0007669"/>
    <property type="project" value="UniProtKB-UniRule"/>
</dbReference>
<dbReference type="GO" id="GO:0008270">
    <property type="term" value="F:zinc ion binding"/>
    <property type="evidence" value="ECO:0007669"/>
    <property type="project" value="UniProtKB-UniRule"/>
</dbReference>
<dbReference type="GO" id="GO:0005975">
    <property type="term" value="P:carbohydrate metabolic process"/>
    <property type="evidence" value="ECO:0007669"/>
    <property type="project" value="UniProtKB-UniRule"/>
</dbReference>
<dbReference type="GO" id="GO:2001061">
    <property type="term" value="P:D-glycero-D-manno-heptose 7-phosphate biosynthetic process"/>
    <property type="evidence" value="ECO:0007669"/>
    <property type="project" value="UniProtKB-UniPathway"/>
</dbReference>
<dbReference type="CDD" id="cd05006">
    <property type="entry name" value="SIS_GmhA"/>
    <property type="match status" value="1"/>
</dbReference>
<dbReference type="Gene3D" id="3.40.50.10490">
    <property type="entry name" value="Glucose-6-phosphate isomerase like protein, domain 1"/>
    <property type="match status" value="1"/>
</dbReference>
<dbReference type="HAMAP" id="MF_00067">
    <property type="entry name" value="GmhA"/>
    <property type="match status" value="1"/>
</dbReference>
<dbReference type="InterPro" id="IPR035461">
    <property type="entry name" value="GmhA/DiaA"/>
</dbReference>
<dbReference type="InterPro" id="IPR004515">
    <property type="entry name" value="Phosphoheptose_Isoase"/>
</dbReference>
<dbReference type="InterPro" id="IPR001347">
    <property type="entry name" value="SIS_dom"/>
</dbReference>
<dbReference type="InterPro" id="IPR046348">
    <property type="entry name" value="SIS_dom_sf"/>
</dbReference>
<dbReference type="InterPro" id="IPR050099">
    <property type="entry name" value="SIS_GmhA/DiaA_subfam"/>
</dbReference>
<dbReference type="PANTHER" id="PTHR30390:SF6">
    <property type="entry name" value="DNAA INITIATOR-ASSOCIATING PROTEIN DIAA"/>
    <property type="match status" value="1"/>
</dbReference>
<dbReference type="PANTHER" id="PTHR30390">
    <property type="entry name" value="SEDOHEPTULOSE 7-PHOSPHATE ISOMERASE / DNAA INITIATOR-ASSOCIATING FACTOR FOR REPLICATION INITIATION"/>
    <property type="match status" value="1"/>
</dbReference>
<dbReference type="Pfam" id="PF13580">
    <property type="entry name" value="SIS_2"/>
    <property type="match status" value="1"/>
</dbReference>
<dbReference type="SUPFAM" id="SSF53697">
    <property type="entry name" value="SIS domain"/>
    <property type="match status" value="1"/>
</dbReference>
<dbReference type="PROSITE" id="PS51464">
    <property type="entry name" value="SIS"/>
    <property type="match status" value="1"/>
</dbReference>
<evidence type="ECO:0000255" key="1">
    <source>
        <dbReference type="HAMAP-Rule" id="MF_00067"/>
    </source>
</evidence>
<comment type="function">
    <text evidence="1">Catalyzes the isomerization of sedoheptulose 7-phosphate in D-glycero-D-manno-heptose 7-phosphate.</text>
</comment>
<comment type="catalytic activity">
    <reaction evidence="1">
        <text>2 D-sedoheptulose 7-phosphate = D-glycero-alpha-D-manno-heptose 7-phosphate + D-glycero-beta-D-manno-heptose 7-phosphate</text>
        <dbReference type="Rhea" id="RHEA:27489"/>
        <dbReference type="ChEBI" id="CHEBI:57483"/>
        <dbReference type="ChEBI" id="CHEBI:60203"/>
        <dbReference type="ChEBI" id="CHEBI:60204"/>
        <dbReference type="EC" id="5.3.1.28"/>
    </reaction>
</comment>
<comment type="cofactor">
    <cofactor evidence="1">
        <name>Zn(2+)</name>
        <dbReference type="ChEBI" id="CHEBI:29105"/>
    </cofactor>
    <text evidence="1">Binds 1 zinc ion per subunit.</text>
</comment>
<comment type="pathway">
    <text evidence="1">Carbohydrate biosynthesis; D-glycero-D-manno-heptose 7-phosphate biosynthesis; D-glycero-alpha-D-manno-heptose 7-phosphate and D-glycero-beta-D-manno-heptose 7-phosphate from sedoheptulose 7-phosphate: step 1/1.</text>
</comment>
<comment type="subunit">
    <text evidence="1">Homotetramer.</text>
</comment>
<comment type="subcellular location">
    <subcellularLocation>
        <location evidence="1">Cytoplasm</location>
    </subcellularLocation>
</comment>
<comment type="miscellaneous">
    <text evidence="1">The reaction produces a racemic mixture of D-glycero-alpha-D-manno-heptose 7-phosphate and D-glycero-beta-D-manno-heptose 7-phosphate.</text>
</comment>
<comment type="similarity">
    <text evidence="1">Belongs to the SIS family. GmhA subfamily.</text>
</comment>
<organism>
    <name type="scientific">Geotalea uraniireducens (strain Rf4)</name>
    <name type="common">Geobacter uraniireducens</name>
    <dbReference type="NCBI Taxonomy" id="351605"/>
    <lineage>
        <taxon>Bacteria</taxon>
        <taxon>Pseudomonadati</taxon>
        <taxon>Thermodesulfobacteriota</taxon>
        <taxon>Desulfuromonadia</taxon>
        <taxon>Geobacterales</taxon>
        <taxon>Geobacteraceae</taxon>
        <taxon>Geotalea</taxon>
    </lineage>
</organism>
<gene>
    <name evidence="1" type="primary">gmhA</name>
    <name type="ordered locus">Gura_2864</name>
</gene>
<keyword id="KW-0119">Carbohydrate metabolism</keyword>
<keyword id="KW-0963">Cytoplasm</keyword>
<keyword id="KW-0413">Isomerase</keyword>
<keyword id="KW-0479">Metal-binding</keyword>
<keyword id="KW-1185">Reference proteome</keyword>
<keyword id="KW-0862">Zinc</keyword>
<protein>
    <recommendedName>
        <fullName evidence="1">Phosphoheptose isomerase</fullName>
        <ecNumber evidence="1">5.3.1.28</ecNumber>
    </recommendedName>
    <alternativeName>
        <fullName evidence="1">Sedoheptulose 7-phosphate isomerase</fullName>
    </alternativeName>
</protein>
<name>GMHA_GEOUR</name>
<proteinExistence type="inferred from homology"/>